<organism>
    <name type="scientific">Listeria monocytogenes serotype 4b (strain F2365)</name>
    <dbReference type="NCBI Taxonomy" id="265669"/>
    <lineage>
        <taxon>Bacteria</taxon>
        <taxon>Bacillati</taxon>
        <taxon>Bacillota</taxon>
        <taxon>Bacilli</taxon>
        <taxon>Bacillales</taxon>
        <taxon>Listeriaceae</taxon>
        <taxon>Listeria</taxon>
    </lineage>
</organism>
<dbReference type="EMBL" id="AE017262">
    <property type="protein sequence ID" value="AAT04191.1"/>
    <property type="molecule type" value="Genomic_DNA"/>
</dbReference>
<dbReference type="RefSeq" id="WP_003725960.1">
    <property type="nucleotide sequence ID" value="NC_002973.6"/>
</dbReference>
<dbReference type="SMR" id="Q71ZS3"/>
<dbReference type="KEGG" id="lmf:LMOf2365_1416"/>
<dbReference type="HOGENOM" id="CLU_030805_9_3_9"/>
<dbReference type="CDD" id="cd00885">
    <property type="entry name" value="cinA"/>
    <property type="match status" value="1"/>
</dbReference>
<dbReference type="Gene3D" id="3.90.950.20">
    <property type="entry name" value="CinA-like"/>
    <property type="match status" value="1"/>
</dbReference>
<dbReference type="Gene3D" id="3.40.980.10">
    <property type="entry name" value="MoaB/Mog-like domain"/>
    <property type="match status" value="1"/>
</dbReference>
<dbReference type="HAMAP" id="MF_00226_B">
    <property type="entry name" value="CinA_B"/>
    <property type="match status" value="1"/>
</dbReference>
<dbReference type="InterPro" id="IPR050101">
    <property type="entry name" value="CinA"/>
</dbReference>
<dbReference type="InterPro" id="IPR036653">
    <property type="entry name" value="CinA-like_C"/>
</dbReference>
<dbReference type="InterPro" id="IPR008136">
    <property type="entry name" value="CinA_C"/>
</dbReference>
<dbReference type="InterPro" id="IPR041424">
    <property type="entry name" value="CinA_KH"/>
</dbReference>
<dbReference type="InterPro" id="IPR008135">
    <property type="entry name" value="Competence-induced_CinA"/>
</dbReference>
<dbReference type="InterPro" id="IPR036425">
    <property type="entry name" value="MoaB/Mog-like_dom_sf"/>
</dbReference>
<dbReference type="InterPro" id="IPR001453">
    <property type="entry name" value="MoaB/Mog_dom"/>
</dbReference>
<dbReference type="NCBIfam" id="TIGR00200">
    <property type="entry name" value="cinA_nterm"/>
    <property type="match status" value="1"/>
</dbReference>
<dbReference type="NCBIfam" id="TIGR00177">
    <property type="entry name" value="molyb_syn"/>
    <property type="match status" value="1"/>
</dbReference>
<dbReference type="NCBIfam" id="TIGR00199">
    <property type="entry name" value="PncC_domain"/>
    <property type="match status" value="1"/>
</dbReference>
<dbReference type="NCBIfam" id="NF001813">
    <property type="entry name" value="PRK00549.1"/>
    <property type="match status" value="1"/>
</dbReference>
<dbReference type="PANTHER" id="PTHR13939">
    <property type="entry name" value="NICOTINAMIDE-NUCLEOTIDE AMIDOHYDROLASE PNCC"/>
    <property type="match status" value="1"/>
</dbReference>
<dbReference type="PANTHER" id="PTHR13939:SF0">
    <property type="entry name" value="NMN AMIDOHYDROLASE-LIKE PROTEIN YFAY"/>
    <property type="match status" value="1"/>
</dbReference>
<dbReference type="Pfam" id="PF02464">
    <property type="entry name" value="CinA"/>
    <property type="match status" value="1"/>
</dbReference>
<dbReference type="Pfam" id="PF18146">
    <property type="entry name" value="CinA_KH"/>
    <property type="match status" value="1"/>
</dbReference>
<dbReference type="Pfam" id="PF00994">
    <property type="entry name" value="MoCF_biosynth"/>
    <property type="match status" value="1"/>
</dbReference>
<dbReference type="PIRSF" id="PIRSF006728">
    <property type="entry name" value="CinA"/>
    <property type="match status" value="1"/>
</dbReference>
<dbReference type="SMART" id="SM00852">
    <property type="entry name" value="MoCF_biosynth"/>
    <property type="match status" value="1"/>
</dbReference>
<dbReference type="SUPFAM" id="SSF142433">
    <property type="entry name" value="CinA-like"/>
    <property type="match status" value="1"/>
</dbReference>
<dbReference type="SUPFAM" id="SSF53218">
    <property type="entry name" value="Molybdenum cofactor biosynthesis proteins"/>
    <property type="match status" value="1"/>
</dbReference>
<name>CINA_LISMF</name>
<protein>
    <recommendedName>
        <fullName evidence="1">Putative competence-damage inducible protein</fullName>
    </recommendedName>
</protein>
<sequence length="414" mass="45708">MASAEIIAVGTELLLGQIVNSNAAFISQELAADGIYVYHHTVVGDNPTRLKEVIEIAENRSDILIFTGGLGPTEDDITKQILAAHLQKQLVEDEYHMNKINEYFTSRNRTMTENNKLQAVIIEDSIVLNNDFGFAAGMYLRENNHTYVLLPGPPSEMKPMFTSYANPLLLSESGDQNILESKIMRFFGIGESQLAADLNDLIVTQVNPTIATYAGDNEVVVRITATAKTKEEASRLVKETEEEILRREGTFLYGYGEVSLSELVTAMLLEKELTISAAESFTAGLFQAEIARFPGISKIFKGGMVTYSEETKQSILQVSPQVIKEKGVVSAECAKEMAENVSRLCKTDIGISFTGVAGPDSLEGHPAGTIWIGLSVKGYETEAFQFVYGRDRNHNRRRAVKQGFQLIKQFLDAN</sequence>
<feature type="chain" id="PRO_0000156765" description="Putative competence-damage inducible protein">
    <location>
        <begin position="1"/>
        <end position="414"/>
    </location>
</feature>
<comment type="similarity">
    <text evidence="1">Belongs to the CinA family.</text>
</comment>
<reference key="1">
    <citation type="journal article" date="2004" name="Nucleic Acids Res.">
        <title>Whole genome comparisons of serotype 4b and 1/2a strains of the food-borne pathogen Listeria monocytogenes reveal new insights into the core genome components of this species.</title>
        <authorList>
            <person name="Nelson K.E."/>
            <person name="Fouts D.E."/>
            <person name="Mongodin E.F."/>
            <person name="Ravel J."/>
            <person name="DeBoy R.T."/>
            <person name="Kolonay J.F."/>
            <person name="Rasko D.A."/>
            <person name="Angiuoli S.V."/>
            <person name="Gill S.R."/>
            <person name="Paulsen I.T."/>
            <person name="Peterson J.D."/>
            <person name="White O."/>
            <person name="Nelson W.C."/>
            <person name="Nierman W.C."/>
            <person name="Beanan M.J."/>
            <person name="Brinkac L.M."/>
            <person name="Daugherty S.C."/>
            <person name="Dodson R.J."/>
            <person name="Durkin A.S."/>
            <person name="Madupu R."/>
            <person name="Haft D.H."/>
            <person name="Selengut J."/>
            <person name="Van Aken S.E."/>
            <person name="Khouri H.M."/>
            <person name="Fedorova N."/>
            <person name="Forberger H.A."/>
            <person name="Tran B."/>
            <person name="Kathariou S."/>
            <person name="Wonderling L.D."/>
            <person name="Uhlich G.A."/>
            <person name="Bayles D.O."/>
            <person name="Luchansky J.B."/>
            <person name="Fraser C.M."/>
        </authorList>
    </citation>
    <scope>NUCLEOTIDE SEQUENCE [LARGE SCALE GENOMIC DNA]</scope>
    <source>
        <strain>F2365</strain>
    </source>
</reference>
<proteinExistence type="inferred from homology"/>
<accession>Q71ZS3</accession>
<gene>
    <name evidence="1" type="primary">cinA</name>
    <name type="ordered locus">LMOf2365_1416</name>
</gene>
<evidence type="ECO:0000255" key="1">
    <source>
        <dbReference type="HAMAP-Rule" id="MF_00226"/>
    </source>
</evidence>